<comment type="similarity">
    <text evidence="1">Belongs to the universal ribosomal protein uS9 family.</text>
</comment>
<reference key="1">
    <citation type="journal article" date="2001" name="Science">
        <title>Comparative genomics of Listeria species.</title>
        <authorList>
            <person name="Glaser P."/>
            <person name="Frangeul L."/>
            <person name="Buchrieser C."/>
            <person name="Rusniok C."/>
            <person name="Amend A."/>
            <person name="Baquero F."/>
            <person name="Berche P."/>
            <person name="Bloecker H."/>
            <person name="Brandt P."/>
            <person name="Chakraborty T."/>
            <person name="Charbit A."/>
            <person name="Chetouani F."/>
            <person name="Couve E."/>
            <person name="de Daruvar A."/>
            <person name="Dehoux P."/>
            <person name="Domann E."/>
            <person name="Dominguez-Bernal G."/>
            <person name="Duchaud E."/>
            <person name="Durant L."/>
            <person name="Dussurget O."/>
            <person name="Entian K.-D."/>
            <person name="Fsihi H."/>
            <person name="Garcia-del Portillo F."/>
            <person name="Garrido P."/>
            <person name="Gautier L."/>
            <person name="Goebel W."/>
            <person name="Gomez-Lopez N."/>
            <person name="Hain T."/>
            <person name="Hauf J."/>
            <person name="Jackson D."/>
            <person name="Jones L.-M."/>
            <person name="Kaerst U."/>
            <person name="Kreft J."/>
            <person name="Kuhn M."/>
            <person name="Kunst F."/>
            <person name="Kurapkat G."/>
            <person name="Madueno E."/>
            <person name="Maitournam A."/>
            <person name="Mata Vicente J."/>
            <person name="Ng E."/>
            <person name="Nedjari H."/>
            <person name="Nordsiek G."/>
            <person name="Novella S."/>
            <person name="de Pablos B."/>
            <person name="Perez-Diaz J.-C."/>
            <person name="Purcell R."/>
            <person name="Remmel B."/>
            <person name="Rose M."/>
            <person name="Schlueter T."/>
            <person name="Simoes N."/>
            <person name="Tierrez A."/>
            <person name="Vazquez-Boland J.-A."/>
            <person name="Voss H."/>
            <person name="Wehland J."/>
            <person name="Cossart P."/>
        </authorList>
    </citation>
    <scope>NUCLEOTIDE SEQUENCE [LARGE SCALE GENOMIC DNA]</scope>
    <source>
        <strain>ATCC BAA-680 / CLIP 11262</strain>
    </source>
</reference>
<gene>
    <name evidence="1" type="primary">rpsI</name>
    <name type="ordered locus">lin2745</name>
</gene>
<sequence>MAQVQYYGTGRRKSSVARVRLVPGDGKIVINNRDWEDYIPFAALREVIKQPLVATETLGNYDVLVNVHGGGYTGQAGAIRHGVARALLQVAPEYRPALKSAGLLTRDPRMKERKKYGLKGARRAPQFSKR</sequence>
<feature type="chain" id="PRO_0000111370" description="Small ribosomal subunit protein uS9">
    <location>
        <begin position="1"/>
        <end position="130"/>
    </location>
</feature>
<feature type="region of interest" description="Disordered" evidence="2">
    <location>
        <begin position="109"/>
        <end position="130"/>
    </location>
</feature>
<feature type="compositionally biased region" description="Basic residues" evidence="2">
    <location>
        <begin position="111"/>
        <end position="130"/>
    </location>
</feature>
<organism>
    <name type="scientific">Listeria innocua serovar 6a (strain ATCC BAA-680 / CLIP 11262)</name>
    <dbReference type="NCBI Taxonomy" id="272626"/>
    <lineage>
        <taxon>Bacteria</taxon>
        <taxon>Bacillati</taxon>
        <taxon>Bacillota</taxon>
        <taxon>Bacilli</taxon>
        <taxon>Bacillales</taxon>
        <taxon>Listeriaceae</taxon>
        <taxon>Listeria</taxon>
    </lineage>
</organism>
<evidence type="ECO:0000255" key="1">
    <source>
        <dbReference type="HAMAP-Rule" id="MF_00532"/>
    </source>
</evidence>
<evidence type="ECO:0000256" key="2">
    <source>
        <dbReference type="SAM" id="MobiDB-lite"/>
    </source>
</evidence>
<evidence type="ECO:0000305" key="3"/>
<name>RS9_LISIN</name>
<dbReference type="EMBL" id="AL596173">
    <property type="protein sequence ID" value="CAC97971.1"/>
    <property type="molecule type" value="Genomic_DNA"/>
</dbReference>
<dbReference type="PIR" id="AC1775">
    <property type="entry name" value="AC1775"/>
</dbReference>
<dbReference type="RefSeq" id="WP_003726075.1">
    <property type="nucleotide sequence ID" value="NC_003212.1"/>
</dbReference>
<dbReference type="SMR" id="Q927P3"/>
<dbReference type="STRING" id="272626.gene:17567132"/>
<dbReference type="GeneID" id="93236018"/>
<dbReference type="KEGG" id="lin:rpsI"/>
<dbReference type="eggNOG" id="COG0103">
    <property type="taxonomic scope" value="Bacteria"/>
</dbReference>
<dbReference type="HOGENOM" id="CLU_046483_2_1_9"/>
<dbReference type="OrthoDB" id="9803965at2"/>
<dbReference type="Proteomes" id="UP000002513">
    <property type="component" value="Chromosome"/>
</dbReference>
<dbReference type="GO" id="GO:0022627">
    <property type="term" value="C:cytosolic small ribosomal subunit"/>
    <property type="evidence" value="ECO:0007669"/>
    <property type="project" value="TreeGrafter"/>
</dbReference>
<dbReference type="GO" id="GO:0003723">
    <property type="term" value="F:RNA binding"/>
    <property type="evidence" value="ECO:0007669"/>
    <property type="project" value="TreeGrafter"/>
</dbReference>
<dbReference type="GO" id="GO:0003735">
    <property type="term" value="F:structural constituent of ribosome"/>
    <property type="evidence" value="ECO:0007669"/>
    <property type="project" value="InterPro"/>
</dbReference>
<dbReference type="GO" id="GO:0006412">
    <property type="term" value="P:translation"/>
    <property type="evidence" value="ECO:0007669"/>
    <property type="project" value="UniProtKB-UniRule"/>
</dbReference>
<dbReference type="FunFam" id="3.30.230.10:FF:000001">
    <property type="entry name" value="30S ribosomal protein S9"/>
    <property type="match status" value="1"/>
</dbReference>
<dbReference type="Gene3D" id="3.30.230.10">
    <property type="match status" value="1"/>
</dbReference>
<dbReference type="HAMAP" id="MF_00532_B">
    <property type="entry name" value="Ribosomal_uS9_B"/>
    <property type="match status" value="1"/>
</dbReference>
<dbReference type="InterPro" id="IPR020568">
    <property type="entry name" value="Ribosomal_Su5_D2-typ_SF"/>
</dbReference>
<dbReference type="InterPro" id="IPR000754">
    <property type="entry name" value="Ribosomal_uS9"/>
</dbReference>
<dbReference type="InterPro" id="IPR023035">
    <property type="entry name" value="Ribosomal_uS9_bac/plastid"/>
</dbReference>
<dbReference type="InterPro" id="IPR020574">
    <property type="entry name" value="Ribosomal_uS9_CS"/>
</dbReference>
<dbReference type="InterPro" id="IPR014721">
    <property type="entry name" value="Ribsml_uS5_D2-typ_fold_subgr"/>
</dbReference>
<dbReference type="NCBIfam" id="NF001099">
    <property type="entry name" value="PRK00132.1"/>
    <property type="match status" value="1"/>
</dbReference>
<dbReference type="PANTHER" id="PTHR21569">
    <property type="entry name" value="RIBOSOMAL PROTEIN S9"/>
    <property type="match status" value="1"/>
</dbReference>
<dbReference type="PANTHER" id="PTHR21569:SF1">
    <property type="entry name" value="SMALL RIBOSOMAL SUBUNIT PROTEIN US9M"/>
    <property type="match status" value="1"/>
</dbReference>
<dbReference type="Pfam" id="PF00380">
    <property type="entry name" value="Ribosomal_S9"/>
    <property type="match status" value="1"/>
</dbReference>
<dbReference type="SUPFAM" id="SSF54211">
    <property type="entry name" value="Ribosomal protein S5 domain 2-like"/>
    <property type="match status" value="1"/>
</dbReference>
<dbReference type="PROSITE" id="PS00360">
    <property type="entry name" value="RIBOSOMAL_S9"/>
    <property type="match status" value="1"/>
</dbReference>
<keyword id="KW-0687">Ribonucleoprotein</keyword>
<keyword id="KW-0689">Ribosomal protein</keyword>
<proteinExistence type="inferred from homology"/>
<accession>Q927P3</accession>
<protein>
    <recommendedName>
        <fullName evidence="1">Small ribosomal subunit protein uS9</fullName>
    </recommendedName>
    <alternativeName>
        <fullName evidence="3">30S ribosomal protein S9</fullName>
    </alternativeName>
</protein>